<feature type="chain" id="PRO_0000256891" description="Chaperonin GroEL">
    <location>
        <begin position="1"/>
        <end position="540"/>
    </location>
</feature>
<feature type="binding site" evidence="1">
    <location>
        <begin position="30"/>
        <end position="33"/>
    </location>
    <ligand>
        <name>ATP</name>
        <dbReference type="ChEBI" id="CHEBI:30616"/>
    </ligand>
</feature>
<feature type="binding site" evidence="1">
    <location>
        <begin position="87"/>
        <end position="91"/>
    </location>
    <ligand>
        <name>ATP</name>
        <dbReference type="ChEBI" id="CHEBI:30616"/>
    </ligand>
</feature>
<feature type="binding site" evidence="1">
    <location>
        <position position="414"/>
    </location>
    <ligand>
        <name>ATP</name>
        <dbReference type="ChEBI" id="CHEBI:30616"/>
    </ligand>
</feature>
<feature type="binding site" evidence="1">
    <location>
        <begin position="479"/>
        <end position="481"/>
    </location>
    <ligand>
        <name>ATP</name>
        <dbReference type="ChEBI" id="CHEBI:30616"/>
    </ligand>
</feature>
<feature type="binding site" evidence="1">
    <location>
        <position position="495"/>
    </location>
    <ligand>
        <name>ATP</name>
        <dbReference type="ChEBI" id="CHEBI:30616"/>
    </ligand>
</feature>
<protein>
    <recommendedName>
        <fullName evidence="1">Chaperonin GroEL</fullName>
        <ecNumber evidence="1">5.6.1.7</ecNumber>
    </recommendedName>
    <alternativeName>
        <fullName evidence="1">60 kDa chaperonin</fullName>
    </alternativeName>
    <alternativeName>
        <fullName evidence="1">Chaperonin-60</fullName>
        <shortName evidence="1">Cpn60</shortName>
    </alternativeName>
</protein>
<accession>Q3ADX3</accession>
<keyword id="KW-0067">ATP-binding</keyword>
<keyword id="KW-0143">Chaperone</keyword>
<keyword id="KW-0963">Cytoplasm</keyword>
<keyword id="KW-0413">Isomerase</keyword>
<keyword id="KW-0547">Nucleotide-binding</keyword>
<keyword id="KW-1185">Reference proteome</keyword>
<comment type="function">
    <text evidence="1">Together with its co-chaperonin GroES, plays an essential role in assisting protein folding. The GroEL-GroES system forms a nano-cage that allows encapsulation of the non-native substrate proteins and provides a physical environment optimized to promote and accelerate protein folding.</text>
</comment>
<comment type="catalytic activity">
    <reaction evidence="1">
        <text>ATP + H2O + a folded polypeptide = ADP + phosphate + an unfolded polypeptide.</text>
        <dbReference type="EC" id="5.6.1.7"/>
    </reaction>
</comment>
<comment type="subunit">
    <text evidence="1">Forms a cylinder of 14 subunits composed of two heptameric rings stacked back-to-back. Interacts with the co-chaperonin GroES.</text>
</comment>
<comment type="subcellular location">
    <subcellularLocation>
        <location evidence="1">Cytoplasm</location>
    </subcellularLocation>
</comment>
<comment type="similarity">
    <text evidence="1">Belongs to the chaperonin (HSP60) family.</text>
</comment>
<dbReference type="EC" id="5.6.1.7" evidence="1"/>
<dbReference type="EMBL" id="CP000141">
    <property type="protein sequence ID" value="ABB15708.1"/>
    <property type="molecule type" value="Genomic_DNA"/>
</dbReference>
<dbReference type="RefSeq" id="WP_011343737.1">
    <property type="nucleotide sequence ID" value="NC_007503.1"/>
</dbReference>
<dbReference type="SMR" id="Q3ADX3"/>
<dbReference type="FunCoup" id="Q3ADX3">
    <property type="interactions" value="439"/>
</dbReference>
<dbReference type="STRING" id="246194.CHY_0807"/>
<dbReference type="KEGG" id="chy:CHY_0807"/>
<dbReference type="eggNOG" id="COG0459">
    <property type="taxonomic scope" value="Bacteria"/>
</dbReference>
<dbReference type="HOGENOM" id="CLU_016503_3_0_9"/>
<dbReference type="InParanoid" id="Q3ADX3"/>
<dbReference type="OrthoDB" id="9766614at2"/>
<dbReference type="Proteomes" id="UP000002706">
    <property type="component" value="Chromosome"/>
</dbReference>
<dbReference type="GO" id="GO:0005737">
    <property type="term" value="C:cytoplasm"/>
    <property type="evidence" value="ECO:0007669"/>
    <property type="project" value="UniProtKB-SubCell"/>
</dbReference>
<dbReference type="GO" id="GO:0005524">
    <property type="term" value="F:ATP binding"/>
    <property type="evidence" value="ECO:0007669"/>
    <property type="project" value="UniProtKB-UniRule"/>
</dbReference>
<dbReference type="GO" id="GO:0140662">
    <property type="term" value="F:ATP-dependent protein folding chaperone"/>
    <property type="evidence" value="ECO:0007669"/>
    <property type="project" value="InterPro"/>
</dbReference>
<dbReference type="GO" id="GO:0016853">
    <property type="term" value="F:isomerase activity"/>
    <property type="evidence" value="ECO:0007669"/>
    <property type="project" value="UniProtKB-KW"/>
</dbReference>
<dbReference type="GO" id="GO:0051082">
    <property type="term" value="F:unfolded protein binding"/>
    <property type="evidence" value="ECO:0007669"/>
    <property type="project" value="UniProtKB-UniRule"/>
</dbReference>
<dbReference type="GO" id="GO:0042026">
    <property type="term" value="P:protein refolding"/>
    <property type="evidence" value="ECO:0007669"/>
    <property type="project" value="UniProtKB-UniRule"/>
</dbReference>
<dbReference type="CDD" id="cd03344">
    <property type="entry name" value="GroEL"/>
    <property type="match status" value="1"/>
</dbReference>
<dbReference type="FunFam" id="3.50.7.10:FF:000001">
    <property type="entry name" value="60 kDa chaperonin"/>
    <property type="match status" value="1"/>
</dbReference>
<dbReference type="Gene3D" id="3.50.7.10">
    <property type="entry name" value="GroEL"/>
    <property type="match status" value="1"/>
</dbReference>
<dbReference type="Gene3D" id="1.10.560.10">
    <property type="entry name" value="GroEL-like equatorial domain"/>
    <property type="match status" value="1"/>
</dbReference>
<dbReference type="Gene3D" id="3.30.260.10">
    <property type="entry name" value="TCP-1-like chaperonin intermediate domain"/>
    <property type="match status" value="1"/>
</dbReference>
<dbReference type="HAMAP" id="MF_00600">
    <property type="entry name" value="CH60"/>
    <property type="match status" value="1"/>
</dbReference>
<dbReference type="InterPro" id="IPR018370">
    <property type="entry name" value="Chaperonin_Cpn60_CS"/>
</dbReference>
<dbReference type="InterPro" id="IPR001844">
    <property type="entry name" value="Cpn60/GroEL"/>
</dbReference>
<dbReference type="InterPro" id="IPR002423">
    <property type="entry name" value="Cpn60/GroEL/TCP-1"/>
</dbReference>
<dbReference type="InterPro" id="IPR027409">
    <property type="entry name" value="GroEL-like_apical_dom_sf"/>
</dbReference>
<dbReference type="InterPro" id="IPR027413">
    <property type="entry name" value="GROEL-like_equatorial_sf"/>
</dbReference>
<dbReference type="InterPro" id="IPR027410">
    <property type="entry name" value="TCP-1-like_intermed_sf"/>
</dbReference>
<dbReference type="NCBIfam" id="TIGR02348">
    <property type="entry name" value="GroEL"/>
    <property type="match status" value="1"/>
</dbReference>
<dbReference type="NCBIfam" id="NF000592">
    <property type="entry name" value="PRK00013.1"/>
    <property type="match status" value="1"/>
</dbReference>
<dbReference type="NCBIfam" id="NF009487">
    <property type="entry name" value="PRK12849.1"/>
    <property type="match status" value="1"/>
</dbReference>
<dbReference type="NCBIfam" id="NF009488">
    <property type="entry name" value="PRK12850.1"/>
    <property type="match status" value="1"/>
</dbReference>
<dbReference type="NCBIfam" id="NF009489">
    <property type="entry name" value="PRK12851.1"/>
    <property type="match status" value="1"/>
</dbReference>
<dbReference type="PANTHER" id="PTHR45633">
    <property type="entry name" value="60 KDA HEAT SHOCK PROTEIN, MITOCHONDRIAL"/>
    <property type="match status" value="1"/>
</dbReference>
<dbReference type="Pfam" id="PF00118">
    <property type="entry name" value="Cpn60_TCP1"/>
    <property type="match status" value="1"/>
</dbReference>
<dbReference type="PRINTS" id="PR00298">
    <property type="entry name" value="CHAPERONIN60"/>
</dbReference>
<dbReference type="SUPFAM" id="SSF52029">
    <property type="entry name" value="GroEL apical domain-like"/>
    <property type="match status" value="1"/>
</dbReference>
<dbReference type="SUPFAM" id="SSF48592">
    <property type="entry name" value="GroEL equatorial domain-like"/>
    <property type="match status" value="1"/>
</dbReference>
<dbReference type="SUPFAM" id="SSF54849">
    <property type="entry name" value="GroEL-intermediate domain like"/>
    <property type="match status" value="1"/>
</dbReference>
<dbReference type="PROSITE" id="PS00296">
    <property type="entry name" value="CHAPERONINS_CPN60"/>
    <property type="match status" value="1"/>
</dbReference>
<proteinExistence type="inferred from homology"/>
<gene>
    <name evidence="1" type="primary">groEL</name>
    <name evidence="1" type="synonym">groL</name>
    <name type="ordered locus">CHY_0807</name>
</gene>
<sequence>MAGKQILFREDARRALERGVNALADAVKVTLGPKGRNVVLEKKFGSPQIINDGVSIAREIELADPVENMGAQLVKEVATKTNDVAGDGTTTATVLAQAIIREGLKNVTAGANPMILRKGIEKAVAKAVEEIKAIAKPVETSEAIAQVAAISANDEEIGKLIAEAMEKVGKDGVITVEESQGLGTTLEVVEGMSFDRGYISPYMITDPDKMEAILNDPYILITDKKISAIADLLPILEKVVQTGKPLLIIAEDVEGEALATLVVNKLRGTLTCVAVKAPGFGDRRKAMLEDIAILTNGQVVSEELGFKLENATLSMLGRAKQVRVKKEETIIVGGQGSPEAIEKRIAQIKKQIEETTSDFDREKLQERLAKLAGGVAVIQVGAATETEMKEKKLRIEDALNATRAAVEEGIVAGGGTTYIHIIKALEELEKTATGDERTGIAIVRKALEEPLKQIAINAGLEGSVIVEKVKTLPVGHGFNALTEEYVDMIAAGIVDPAKVTRSALQNAASVAAMLLTTEALVAEKPEKEKKGPDMPNMDMM</sequence>
<organism>
    <name type="scientific">Carboxydothermus hydrogenoformans (strain ATCC BAA-161 / DSM 6008 / Z-2901)</name>
    <dbReference type="NCBI Taxonomy" id="246194"/>
    <lineage>
        <taxon>Bacteria</taxon>
        <taxon>Bacillati</taxon>
        <taxon>Bacillota</taxon>
        <taxon>Clostridia</taxon>
        <taxon>Thermoanaerobacterales</taxon>
        <taxon>Thermoanaerobacteraceae</taxon>
        <taxon>Carboxydothermus</taxon>
    </lineage>
</organism>
<evidence type="ECO:0000255" key="1">
    <source>
        <dbReference type="HAMAP-Rule" id="MF_00600"/>
    </source>
</evidence>
<name>CH60_CARHZ</name>
<reference key="1">
    <citation type="journal article" date="2005" name="PLoS Genet.">
        <title>Life in hot carbon monoxide: the complete genome sequence of Carboxydothermus hydrogenoformans Z-2901.</title>
        <authorList>
            <person name="Wu M."/>
            <person name="Ren Q."/>
            <person name="Durkin A.S."/>
            <person name="Daugherty S.C."/>
            <person name="Brinkac L.M."/>
            <person name="Dodson R.J."/>
            <person name="Madupu R."/>
            <person name="Sullivan S.A."/>
            <person name="Kolonay J.F."/>
            <person name="Nelson W.C."/>
            <person name="Tallon L.J."/>
            <person name="Jones K.M."/>
            <person name="Ulrich L.E."/>
            <person name="Gonzalez J.M."/>
            <person name="Zhulin I.B."/>
            <person name="Robb F.T."/>
            <person name="Eisen J.A."/>
        </authorList>
    </citation>
    <scope>NUCLEOTIDE SEQUENCE [LARGE SCALE GENOMIC DNA]</scope>
    <source>
        <strain>ATCC BAA-161 / DSM 6008 / Z-2901</strain>
    </source>
</reference>